<organism>
    <name type="scientific">Synechococcus sp. (strain ATCC 27144 / PCC 6301 / SAUG 1402/1)</name>
    <name type="common">Anacystis nidulans</name>
    <dbReference type="NCBI Taxonomy" id="269084"/>
    <lineage>
        <taxon>Bacteria</taxon>
        <taxon>Bacillati</taxon>
        <taxon>Cyanobacteriota</taxon>
        <taxon>Cyanophyceae</taxon>
        <taxon>Synechococcales</taxon>
        <taxon>Synechococcaceae</taxon>
        <taxon>Synechococcus</taxon>
    </lineage>
</organism>
<comment type="function">
    <text evidence="1">This protein is postulated to act both as terminal energy acceptor (by its phycobilin-like domains) and as a linker polypeptide (by its repeats and arms) that stabilizes the phycobilisome core architecture. Has intrinsic bilin lyase activity (By similarity).</text>
</comment>
<comment type="subunit">
    <text evidence="1">Phycobilisomes of this organism are composed of a two cylinder core, from which six rods radiate. The core is mainly composed of allophycocyanin alpha and beta chains, and of three minor components: the allophycocyanin alpha-B chain, a 18.3 kDa polypeptide, and the anchor polypeptide L-CM (By similarity).</text>
</comment>
<comment type="subcellular location">
    <subcellularLocation>
        <location>Cellular thylakoid membrane</location>
        <topology>Peripheral membrane protein</topology>
        <orientation>Cytoplasmic side</orientation>
    </subcellularLocation>
    <text>Anchors the phycobilisome perpendicularly to the cytoplasmic surface of the thylakoid membrane.</text>
</comment>
<comment type="PTM">
    <text evidence="1">Contains one covalently linked bilin chromophore. This protein autochromophorylates (By similarity).</text>
</comment>
<comment type="similarity">
    <text evidence="2">Belongs to the phycobilisome linker protein family.</text>
</comment>
<reference key="1">
    <citation type="journal article" date="1991" name="J. Biol. Chem.">
        <title>The 'anchor polypeptide' of cyanobacterial phycobilisomes. Molecular characterization of the Synechococcus sp. PCC 6301 apcE gene.</title>
        <authorList>
            <person name="Capuano V."/>
            <person name="Braux A.-S."/>
            <person name="Tandeau de Marsac N."/>
            <person name="Houmard J."/>
        </authorList>
    </citation>
    <scope>NUCLEOTIDE SEQUENCE [GENOMIC DNA]</scope>
</reference>
<reference key="2">
    <citation type="journal article" date="2007" name="Photosyn. Res.">
        <title>Complete nucleotide sequence of the freshwater unicellular cyanobacterium Synechococcus elongatus PCC 6301 chromosome: gene content and organization.</title>
        <authorList>
            <person name="Sugita C."/>
            <person name="Ogata K."/>
            <person name="Shikata M."/>
            <person name="Jikuya H."/>
            <person name="Takano J."/>
            <person name="Furumichi M."/>
            <person name="Kanehisa M."/>
            <person name="Omata T."/>
            <person name="Sugiura M."/>
            <person name="Sugita M."/>
        </authorList>
    </citation>
    <scope>NUCLEOTIDE SEQUENCE [LARGE SCALE GENOMIC DNA]</scope>
    <source>
        <strain>ATCC 27144 / PCC 6301 / SAUG 1402/1</strain>
    </source>
</reference>
<dbReference type="EC" id="4.-.-.-"/>
<dbReference type="EMBL" id="X53425">
    <property type="protein sequence ID" value="CAA37514.1"/>
    <property type="molecule type" value="Genomic_DNA"/>
</dbReference>
<dbReference type="EMBL" id="AP008231">
    <property type="protein sequence ID" value="BAD79375.1"/>
    <property type="molecule type" value="Genomic_DNA"/>
</dbReference>
<dbReference type="PIR" id="A39784">
    <property type="entry name" value="A39784"/>
</dbReference>
<dbReference type="RefSeq" id="WP_011243497.1">
    <property type="nucleotide sequence ID" value="NZ_CP085785.1"/>
</dbReference>
<dbReference type="SMR" id="P28035"/>
<dbReference type="KEGG" id="syc:syc1185_d"/>
<dbReference type="eggNOG" id="COG0448">
    <property type="taxonomic scope" value="Bacteria"/>
</dbReference>
<dbReference type="Proteomes" id="UP000001175">
    <property type="component" value="Chromosome"/>
</dbReference>
<dbReference type="GO" id="GO:0030089">
    <property type="term" value="C:phycobilisome"/>
    <property type="evidence" value="ECO:0007669"/>
    <property type="project" value="UniProtKB-KW"/>
</dbReference>
<dbReference type="GO" id="GO:0031676">
    <property type="term" value="C:plasma membrane-derived thylakoid membrane"/>
    <property type="evidence" value="ECO:0007669"/>
    <property type="project" value="UniProtKB-SubCell"/>
</dbReference>
<dbReference type="GO" id="GO:0016829">
    <property type="term" value="F:lyase activity"/>
    <property type="evidence" value="ECO:0007669"/>
    <property type="project" value="UniProtKB-KW"/>
</dbReference>
<dbReference type="GO" id="GO:0015979">
    <property type="term" value="P:photosynthesis"/>
    <property type="evidence" value="ECO:0007669"/>
    <property type="project" value="UniProtKB-KW"/>
</dbReference>
<dbReference type="CDD" id="cd12128">
    <property type="entry name" value="PBP_PBS-LCM"/>
    <property type="match status" value="1"/>
</dbReference>
<dbReference type="Gene3D" id="1.10.3130.20">
    <property type="entry name" value="Phycobilisome linker domain"/>
    <property type="match status" value="2"/>
</dbReference>
<dbReference type="Gene3D" id="1.10.490.20">
    <property type="entry name" value="Phycocyanins"/>
    <property type="match status" value="1"/>
</dbReference>
<dbReference type="InterPro" id="IPR009050">
    <property type="entry name" value="Globin-like_sf"/>
</dbReference>
<dbReference type="InterPro" id="IPR001297">
    <property type="entry name" value="PBS_linker_dom"/>
</dbReference>
<dbReference type="InterPro" id="IPR038255">
    <property type="entry name" value="PBS_linker_sf"/>
</dbReference>
<dbReference type="InterPro" id="IPR012128">
    <property type="entry name" value="Phycobilisome_asu/bsu"/>
</dbReference>
<dbReference type="InterPro" id="IPR038719">
    <property type="entry name" value="Phycobilisome_asu/bsu_sf"/>
</dbReference>
<dbReference type="PANTHER" id="PTHR34011:SF6">
    <property type="entry name" value="PHYCOBILIPROTEIN APCE"/>
    <property type="match status" value="1"/>
</dbReference>
<dbReference type="PANTHER" id="PTHR34011">
    <property type="entry name" value="PHYCOBILISOME 32.1 KDA LINKER POLYPEPTIDE, PHYCOCYANIN-ASSOCIATED, ROD 2-RELATED"/>
    <property type="match status" value="1"/>
</dbReference>
<dbReference type="Pfam" id="PF00427">
    <property type="entry name" value="PBS_linker_poly"/>
    <property type="match status" value="2"/>
</dbReference>
<dbReference type="Pfam" id="PF00502">
    <property type="entry name" value="Phycobilisome"/>
    <property type="match status" value="2"/>
</dbReference>
<dbReference type="SUPFAM" id="SSF46458">
    <property type="entry name" value="Globin-like"/>
    <property type="match status" value="1"/>
</dbReference>
<dbReference type="PROSITE" id="PS51445">
    <property type="entry name" value="PBS_LINKER"/>
    <property type="match status" value="2"/>
</dbReference>
<gene>
    <name type="primary">apcE</name>
    <name type="ordered locus">syc1185_d</name>
</gene>
<protein>
    <recommendedName>
        <fullName>Phycobiliprotein ApcE</fullName>
        <ecNumber>4.-.-.-</ecNumber>
    </recommendedName>
    <alternativeName>
        <fullName>Anchor polypeptide LCM</fullName>
    </alternativeName>
    <alternativeName>
        <fullName>Phycobilisome linker polypeptide</fullName>
    </alternativeName>
</protein>
<evidence type="ECO:0000250" key="1"/>
<evidence type="ECO:0000255" key="2">
    <source>
        <dbReference type="PROSITE-ProRule" id="PRU00775"/>
    </source>
</evidence>
<evidence type="ECO:0000256" key="3">
    <source>
        <dbReference type="SAM" id="MobiDB-lite"/>
    </source>
</evidence>
<evidence type="ECO:0000305" key="4"/>
<sequence>MTVTASGGSSLARPQLYQTVPGSTIVQAEQQDRFPQQGELRELSSYFQSGLKRLAIAEIITRNSDTIVSRAANRIFVGGSPLAYIERPKVDPRNLRSAEEQRAREAKLGTVTFVESSGGGGFFSGLTAALGGAGAVRIPSGFRPINVARYGPRNMQKSLRDMSWFLRYITYAIVAGDPNILVVNVRGLREIIEKACSTPATLVALQDMRATSAGYFRNDPEAQQLVKDYFDVLIREFEAPTPSLKQRQRFAEDQQGLALPQSYANAAERRPKFVIKSTLSTVEKNEAIKAAYRQVFERDITRAYSQKVSDLESKVKNGEISTKEFIRRLGKSPLYRQQFHDRFVNSRVIELAFRHFLGRGISSAEEFTRYFDLLSAKGFAALIDALVDSQEYADYFGEETVPYLRGLGQEAQECRNWGVQQELFKYSAPFVKVPQFVTLFGEYKQPLLDQHPYGAGNDPLEIQFGAIFPSRTVNNRTNPAPFGKDTRRLLVSKGGVNNQVGSAAFQQSGTTPTKIFKLTQVAAGSSSIRSKSVGNPSIRQTESTTQAVIRAAYRQVFGRDLYEGQRLTVPEIKLENGEITVREFVRQIAKSETFRKLYWNNLYVVKAVEYIHRRLLGRPTTGRAEINAYFDISAKKGFYALVDAILDSPEYIAAFGEDTVPYERYITPKGLALRSVRGLEASEKVKASLRPAAGAQERRPEVGRR</sequence>
<name>APCE_SYNP6</name>
<accession>P28035</accession>
<accession>Q5N2U5</accession>
<feature type="chain" id="PRO_0000199264" description="Phycobiliprotein ApcE">
    <location>
        <begin position="1"/>
        <end position="705"/>
    </location>
</feature>
<feature type="domain" description="PBS-linker 1" evidence="2">
    <location>
        <begin position="253"/>
        <end position="433"/>
    </location>
</feature>
<feature type="domain" description="PBS-linker 2" evidence="2">
    <location>
        <begin position="514"/>
        <end position="691"/>
    </location>
</feature>
<feature type="region of interest" description="Phycobilin-like 1">
    <location>
        <begin position="18"/>
        <end position="76"/>
    </location>
</feature>
<feature type="region of interest" description="Phycobilin-like loop">
    <location>
        <begin position="77"/>
        <end position="145"/>
    </location>
</feature>
<feature type="region of interest" description="Phycobilin-like 2">
    <location>
        <begin position="146"/>
        <end position="238"/>
    </location>
</feature>
<feature type="region of interest" description="Disordered" evidence="3">
    <location>
        <begin position="685"/>
        <end position="705"/>
    </location>
</feature>
<feature type="compositionally biased region" description="Basic and acidic residues" evidence="3">
    <location>
        <begin position="696"/>
        <end position="705"/>
    </location>
</feature>
<feature type="binding site" description="covalent" evidence="1">
    <location>
        <position position="196"/>
    </location>
    <ligand>
        <name>(2R,3E)-phycocyanobilin</name>
        <dbReference type="ChEBI" id="CHEBI:85275"/>
    </ligand>
</feature>
<feature type="sequence conflict" description="In Ref. 1; CAA37514." evidence="4" ref="1">
    <original>FFS</original>
    <variation>LLFH</variation>
    <location>
        <begin position="122"/>
        <end position="124"/>
    </location>
</feature>
<feature type="sequence conflict" description="In Ref. 1; CAA37514." evidence="4" ref="1">
    <original>S</original>
    <variation>C</variation>
    <location>
        <position position="243"/>
    </location>
</feature>
<feature type="sequence conflict" description="In Ref. 1; CAA37514." evidence="4" ref="1">
    <original>A</original>
    <variation>R</variation>
    <location>
        <position position="411"/>
    </location>
</feature>
<feature type="sequence conflict" description="In Ref. 1; CAA37514." evidence="4" ref="1">
    <original>VA</original>
    <variation>AC</variation>
    <location>
        <begin position="521"/>
        <end position="522"/>
    </location>
</feature>
<feature type="sequence conflict" description="In Ref. 1." evidence="4" ref="1">
    <original>ASEKVKASLRPAAGAQERRPEVGRR</original>
    <variation>SL</variation>
    <location>
        <begin position="681"/>
        <end position="705"/>
    </location>
</feature>
<proteinExistence type="inferred from homology"/>
<keyword id="KW-0042">Antenna complex</keyword>
<keyword id="KW-0089">Bile pigment</keyword>
<keyword id="KW-0157">Chromophore</keyword>
<keyword id="KW-0249">Electron transport</keyword>
<keyword id="KW-0456">Lyase</keyword>
<keyword id="KW-0472">Membrane</keyword>
<keyword id="KW-0602">Photosynthesis</keyword>
<keyword id="KW-0605">Phycobilisome</keyword>
<keyword id="KW-0677">Repeat</keyword>
<keyword id="KW-0793">Thylakoid</keyword>
<keyword id="KW-0813">Transport</keyword>